<gene>
    <name type="primary">Cog3</name>
</gene>
<accession>Q8CI04</accession>
<sequence length="820" mass="93283">MAEAAAERDAREKLSLWDGRPDSMAPLTDRQTDSVLELKAAVENLPVPAELPIEDVCSLASQSLPIELTAVVPDSTEDILLKGFTSLGMEEERIETAQQFFSWFAKLQTQMDQDEGTKYRQMRDYLSGFQEQCDAILNDVNSALQHLESLQKQYLFVSNKTGTLHEACEQLLKEQSELADLAEHIQQKLSYFNELETINTKLNSPTLSVNSEGFIPMLAKLDDCITYISSHPNFKDYPVYLLKFKQCLSKALHLMKTYTVNTLQTLTNQLLKRDPSSVPNADNAFTLFYVKFRAAAPKVRTLIEQIEQRSEKIPEYQHLLNDIHQCYLDQRELLLGPSIAYTVTELTSQNNRDHCALVRSGCAFMVHVCQDEHQLYNEFFTKPTSKLDELLEKLCVSLYDVFRPLIIHVIHLETLSELCGILKNEVLEDHVQHNAEQLGAFAAGVKQMLEDVQERLVYRTHIYIQTDITGYKPAPGDLAYPDKLVMMEQIAQSLKDEQKKAPSEASFSDVRLEEGEASGLRKSGSTDSLNPRPQTTISPADLHGMWYPTVRRTLVCLSKLYRCIDRAVFQGLSQEALSACIQSLLGASESISKNKTQIDGQLFLIKHLLILREQIAPFHTEFTIKEISLDLKKTRDAAFKILNPMTVPRFFRLNSNNALIEFLLEGTPEIREHYLDSKKDVDRHLKSACEQFIQQQTRLFGEQLEEFMTKVSALKTMASQGGPKYTLSQQPWAQPAKVNDLVATAYKTIKTKLPLTLRSMALYLSNKDTEFILFKPVRNNIQQVFQKFHALLKEEFSSEDIQIIACPSMEQLNLLLSVSK</sequence>
<comment type="function">
    <text evidence="2">Involved in ER-Golgi transport. Also involved in retrograde (Golgi to ER) transport.</text>
</comment>
<comment type="subunit">
    <text evidence="1">Component of the conserved oligomeric Golgi complex which is composed of eight different subunits and is required for normal Golgi morphology and localization. Interacts with TMEM115.</text>
</comment>
<comment type="subcellular location">
    <subcellularLocation>
        <location evidence="1">Golgi apparatus</location>
        <location evidence="1">Golgi stack membrane</location>
        <topology evidence="1">Peripheral membrane protein</topology>
    </subcellularLocation>
    <text evidence="1">Associated with the peripheral membrane of cis/medial cisternae.</text>
</comment>
<comment type="similarity">
    <text evidence="4">Belongs to the COG3 family.</text>
</comment>
<reference key="1">
    <citation type="journal article" date="2004" name="Genome Res.">
        <title>The status, quality, and expansion of the NIH full-length cDNA project: the Mammalian Gene Collection (MGC).</title>
        <authorList>
            <consortium name="The MGC Project Team"/>
        </authorList>
    </citation>
    <scope>NUCLEOTIDE SEQUENCE [LARGE SCALE MRNA]</scope>
    <source>
        <strain>Czech II</strain>
        <tissue>Mammary tumor</tissue>
    </source>
</reference>
<reference key="2">
    <citation type="journal article" date="2010" name="Cell">
        <title>A tissue-specific atlas of mouse protein phosphorylation and expression.</title>
        <authorList>
            <person name="Huttlin E.L."/>
            <person name="Jedrychowski M.P."/>
            <person name="Elias J.E."/>
            <person name="Goswami T."/>
            <person name="Rad R."/>
            <person name="Beausoleil S.A."/>
            <person name="Villen J."/>
            <person name="Haas W."/>
            <person name="Sowa M.E."/>
            <person name="Gygi S.P."/>
        </authorList>
    </citation>
    <scope>IDENTIFICATION BY MASS SPECTROMETRY [LARGE SCALE ANALYSIS]</scope>
    <source>
        <tissue>Brain</tissue>
        <tissue>Brown adipose tissue</tissue>
        <tissue>Heart</tissue>
        <tissue>Kidney</tissue>
        <tissue>Liver</tissue>
        <tissue>Lung</tissue>
        <tissue>Pancreas</tissue>
        <tissue>Spleen</tissue>
        <tissue>Testis</tissue>
    </source>
</reference>
<proteinExistence type="evidence at protein level"/>
<protein>
    <recommendedName>
        <fullName>Conserved oligomeric Golgi complex subunit 3</fullName>
        <shortName>COG complex subunit 3</shortName>
    </recommendedName>
    <alternativeName>
        <fullName>Component of oligomeric Golgi complex 3</fullName>
    </alternativeName>
</protein>
<organism>
    <name type="scientific">Mus musculus</name>
    <name type="common">Mouse</name>
    <dbReference type="NCBI Taxonomy" id="10090"/>
    <lineage>
        <taxon>Eukaryota</taxon>
        <taxon>Metazoa</taxon>
        <taxon>Chordata</taxon>
        <taxon>Craniata</taxon>
        <taxon>Vertebrata</taxon>
        <taxon>Euteleostomi</taxon>
        <taxon>Mammalia</taxon>
        <taxon>Eutheria</taxon>
        <taxon>Euarchontoglires</taxon>
        <taxon>Glires</taxon>
        <taxon>Rodentia</taxon>
        <taxon>Myomorpha</taxon>
        <taxon>Muroidea</taxon>
        <taxon>Muridae</taxon>
        <taxon>Murinae</taxon>
        <taxon>Mus</taxon>
        <taxon>Mus</taxon>
    </lineage>
</organism>
<dbReference type="EMBL" id="BC038030">
    <property type="protein sequence ID" value="AAH38030.1"/>
    <property type="molecule type" value="mRNA"/>
</dbReference>
<dbReference type="SMR" id="Q8CI04"/>
<dbReference type="FunCoup" id="Q8CI04">
    <property type="interactions" value="3220"/>
</dbReference>
<dbReference type="STRING" id="10090.ENSMUSP00000045016"/>
<dbReference type="iPTMnet" id="Q8CI04"/>
<dbReference type="PhosphoSitePlus" id="Q8CI04"/>
<dbReference type="SwissPalm" id="Q8CI04"/>
<dbReference type="PaxDb" id="10090-ENSMUSP00000045016"/>
<dbReference type="PeptideAtlas" id="Q8CI04"/>
<dbReference type="ProteomicsDB" id="283343"/>
<dbReference type="Pumba" id="Q8CI04"/>
<dbReference type="AGR" id="MGI:2450151"/>
<dbReference type="MGI" id="MGI:2450151">
    <property type="gene designation" value="Cog3"/>
</dbReference>
<dbReference type="eggNOG" id="KOG2604">
    <property type="taxonomic scope" value="Eukaryota"/>
</dbReference>
<dbReference type="InParanoid" id="Q8CI04"/>
<dbReference type="PhylomeDB" id="Q8CI04"/>
<dbReference type="Reactome" id="R-MMU-6807878">
    <property type="pathway name" value="COPI-mediated anterograde transport"/>
</dbReference>
<dbReference type="Reactome" id="R-MMU-6811438">
    <property type="pathway name" value="Intra-Golgi traffic"/>
</dbReference>
<dbReference type="Reactome" id="R-MMU-6811440">
    <property type="pathway name" value="Retrograde transport at the Trans-Golgi-Network"/>
</dbReference>
<dbReference type="ChiTaRS" id="Cog3">
    <property type="organism name" value="mouse"/>
</dbReference>
<dbReference type="PRO" id="PR:Q8CI04"/>
<dbReference type="Proteomes" id="UP000000589">
    <property type="component" value="Unplaced"/>
</dbReference>
<dbReference type="RNAct" id="Q8CI04">
    <property type="molecule type" value="protein"/>
</dbReference>
<dbReference type="GO" id="GO:0005801">
    <property type="term" value="C:cis-Golgi network"/>
    <property type="evidence" value="ECO:0007669"/>
    <property type="project" value="InterPro"/>
</dbReference>
<dbReference type="GO" id="GO:0032580">
    <property type="term" value="C:Golgi cisterna membrane"/>
    <property type="evidence" value="ECO:0007669"/>
    <property type="project" value="UniProtKB-SubCell"/>
</dbReference>
<dbReference type="GO" id="GO:0017119">
    <property type="term" value="C:Golgi transport complex"/>
    <property type="evidence" value="ECO:0000250"/>
    <property type="project" value="UniProtKB"/>
</dbReference>
<dbReference type="GO" id="GO:0006888">
    <property type="term" value="P:endoplasmic reticulum to Golgi vesicle-mediated transport"/>
    <property type="evidence" value="ECO:0000250"/>
    <property type="project" value="UniProtKB"/>
</dbReference>
<dbReference type="GO" id="GO:0006891">
    <property type="term" value="P:intra-Golgi vesicle-mediated transport"/>
    <property type="evidence" value="ECO:0000250"/>
    <property type="project" value="UniProtKB"/>
</dbReference>
<dbReference type="GO" id="GO:0006886">
    <property type="term" value="P:intracellular protein transport"/>
    <property type="evidence" value="ECO:0007669"/>
    <property type="project" value="InterPro"/>
</dbReference>
<dbReference type="GO" id="GO:0006890">
    <property type="term" value="P:retrograde vesicle-mediated transport, Golgi to endoplasmic reticulum"/>
    <property type="evidence" value="ECO:0000250"/>
    <property type="project" value="UniProtKB"/>
</dbReference>
<dbReference type="InterPro" id="IPR048685">
    <property type="entry name" value="COG3_C"/>
</dbReference>
<dbReference type="InterPro" id="IPR048320">
    <property type="entry name" value="COG3_N"/>
</dbReference>
<dbReference type="InterPro" id="IPR007265">
    <property type="entry name" value="COG_su3"/>
</dbReference>
<dbReference type="PANTHER" id="PTHR13302">
    <property type="entry name" value="CONSERVED OLIGOMERIC GOLGI COMPLEX COMPONENT 3"/>
    <property type="match status" value="1"/>
</dbReference>
<dbReference type="PANTHER" id="PTHR13302:SF8">
    <property type="entry name" value="CONSERVED OLIGOMERIC GOLGI COMPLEX SUBUNIT 3"/>
    <property type="match status" value="1"/>
</dbReference>
<dbReference type="Pfam" id="PF20671">
    <property type="entry name" value="COG3_C"/>
    <property type="match status" value="1"/>
</dbReference>
<dbReference type="Pfam" id="PF04136">
    <property type="entry name" value="COG3_N"/>
    <property type="match status" value="1"/>
</dbReference>
<feature type="chain" id="PRO_0000213501" description="Conserved oligomeric Golgi complex subunit 3">
    <location>
        <begin position="1"/>
        <end position="820"/>
    </location>
</feature>
<feature type="region of interest" description="Disordered" evidence="3">
    <location>
        <begin position="1"/>
        <end position="26"/>
    </location>
</feature>
<feature type="region of interest" description="Disordered" evidence="3">
    <location>
        <begin position="496"/>
        <end position="535"/>
    </location>
</feature>
<feature type="compositionally biased region" description="Basic and acidic residues" evidence="3">
    <location>
        <begin position="1"/>
        <end position="21"/>
    </location>
</feature>
<feature type="compositionally biased region" description="Polar residues" evidence="3">
    <location>
        <begin position="523"/>
        <end position="535"/>
    </location>
</feature>
<feature type="modified residue" description="Phosphoserine" evidence="2">
    <location>
        <position position="655"/>
    </location>
</feature>
<keyword id="KW-0333">Golgi apparatus</keyword>
<keyword id="KW-0472">Membrane</keyword>
<keyword id="KW-0597">Phosphoprotein</keyword>
<keyword id="KW-0653">Protein transport</keyword>
<keyword id="KW-1185">Reference proteome</keyword>
<keyword id="KW-0813">Transport</keyword>
<name>COG3_MOUSE</name>
<evidence type="ECO:0000250" key="1"/>
<evidence type="ECO:0000250" key="2">
    <source>
        <dbReference type="UniProtKB" id="Q96JB2"/>
    </source>
</evidence>
<evidence type="ECO:0000256" key="3">
    <source>
        <dbReference type="SAM" id="MobiDB-lite"/>
    </source>
</evidence>
<evidence type="ECO:0000305" key="4"/>